<proteinExistence type="inferred from homology"/>
<protein>
    <recommendedName>
        <fullName>Tegument protein US22</fullName>
    </recommendedName>
</protein>
<dbReference type="EMBL" id="AY446894">
    <property type="protein sequence ID" value="AAR31711.1"/>
    <property type="molecule type" value="Genomic_DNA"/>
</dbReference>
<dbReference type="RefSeq" id="YP_081607.1">
    <property type="nucleotide sequence ID" value="NC_006273.2"/>
</dbReference>
<dbReference type="GeneID" id="3077463"/>
<dbReference type="KEGG" id="vg:3077463"/>
<dbReference type="Reactome" id="R-HSA-9609690">
    <property type="pathway name" value="HCMV Early Events"/>
</dbReference>
<dbReference type="Reactome" id="R-HSA-9610379">
    <property type="pathway name" value="HCMV Late Events"/>
</dbReference>
<dbReference type="Proteomes" id="UP000000938">
    <property type="component" value="Segment"/>
</dbReference>
<dbReference type="GO" id="GO:0019033">
    <property type="term" value="C:viral tegument"/>
    <property type="evidence" value="ECO:0000304"/>
    <property type="project" value="Reactome"/>
</dbReference>
<dbReference type="InterPro" id="IPR003360">
    <property type="entry name" value="US22-like"/>
</dbReference>
<dbReference type="Pfam" id="PF02393">
    <property type="entry name" value="US22"/>
    <property type="match status" value="2"/>
</dbReference>
<evidence type="ECO:0000250" key="1"/>
<evidence type="ECO:0000256" key="2">
    <source>
        <dbReference type="SAM" id="MobiDB-lite"/>
    </source>
</evidence>
<evidence type="ECO:0000305" key="3"/>
<sequence>MSLLTKAAAEAWGTYLRQRDERCEDAIRCDYGVFQFRNTVFQKTLSMLQGLYLRQYDPPALRTYVQRHQGTTVALRNPANWFLVMREQAAIPQIYARSLAADYLCCDDTLEAVGVLAVRPPDSDLTRNTKQAQELPCVLMLSHYGTVYVYDWETDGLYEVASDIKAFSKNGLLWCEYVYRHPQTPFATTEPRYHVQKFLCTDPTDAAAVAKTAREMNGLNLVIRTPGRTEVEPLLMLGSIEGLRACRPFDHMPAADFRDLLNFIRQRLCCEWYVVGLVGYYLAYGPFVPSGMVLLDKFGVVYLHKIEDSDLYRIADNFHMFLKCGLLKLRGLCRFDRGLRGECRLEELPVCHHTLKRDVLRWHGALGTITRSQLESALDWFLRPTRGTDKVPNNSSAWGRTDLLPTGALQDNQNWAFPSHSVETLPALQGGLWEDNDETTQTVDGQRCFRMPKFFPPPMCRAPYNECGVELPGGDSSDEDESGRPRRIANRIGDTPETPCNSENEDDTTVEGTSGGPEAMDSQAPYPSEDSPTTEKEAWLQRGRRAKAMHARGHTLKQVPIPEPDQMGDDGPDPGP</sequence>
<reference key="1">
    <citation type="journal article" date="2004" name="J. Gen. Virol.">
        <title>Genetic content of wild-type human cytomegalovirus.</title>
        <authorList>
            <person name="Dolan A."/>
            <person name="Cunningham C."/>
            <person name="Hector R.D."/>
            <person name="Hassan-Walker A.F."/>
            <person name="Lee L."/>
            <person name="Addison C."/>
            <person name="Dargan D.J."/>
            <person name="McGeoch D.J."/>
            <person name="Gatherer D."/>
            <person name="Emery V.C."/>
            <person name="Griffiths P.D."/>
            <person name="Sinzger C."/>
            <person name="McSharry B.P."/>
            <person name="Wilkinson G.W.G."/>
            <person name="Davison A.J."/>
        </authorList>
    </citation>
    <scope>NUCLEOTIDE SEQUENCE [LARGE SCALE GENOMIC DNA]</scope>
</reference>
<accession>F5HDC7</accession>
<comment type="subcellular location">
    <subcellularLocation>
        <location evidence="1">Virion tegument</location>
    </subcellularLocation>
</comment>
<comment type="similarity">
    <text evidence="3">Belongs to the herpesviridae US22 family.</text>
</comment>
<organismHost>
    <name type="scientific">Homo sapiens</name>
    <name type="common">Human</name>
    <dbReference type="NCBI Taxonomy" id="9606"/>
</organismHost>
<feature type="chain" id="PRO_0000418295" description="Tegument protein US22">
    <location>
        <begin position="1"/>
        <end position="576"/>
    </location>
</feature>
<feature type="region of interest" description="Disordered" evidence="2">
    <location>
        <begin position="471"/>
        <end position="576"/>
    </location>
</feature>
<feature type="compositionally biased region" description="Basic residues" evidence="2">
    <location>
        <begin position="542"/>
        <end position="555"/>
    </location>
</feature>
<feature type="compositionally biased region" description="Acidic residues" evidence="2">
    <location>
        <begin position="566"/>
        <end position="576"/>
    </location>
</feature>
<gene>
    <name type="primary">US22</name>
</gene>
<keyword id="KW-1185">Reference proteome</keyword>
<keyword id="KW-0946">Virion</keyword>
<keyword id="KW-0920">Virion tegument</keyword>
<name>US22_HCMVM</name>
<organism>
    <name type="scientific">Human cytomegalovirus (strain Merlin)</name>
    <name type="common">HHV-5</name>
    <name type="synonym">Human herpesvirus 5</name>
    <dbReference type="NCBI Taxonomy" id="295027"/>
    <lineage>
        <taxon>Viruses</taxon>
        <taxon>Duplodnaviria</taxon>
        <taxon>Heunggongvirae</taxon>
        <taxon>Peploviricota</taxon>
        <taxon>Herviviricetes</taxon>
        <taxon>Herpesvirales</taxon>
        <taxon>Orthoherpesviridae</taxon>
        <taxon>Betaherpesvirinae</taxon>
        <taxon>Cytomegalovirus</taxon>
        <taxon>Cytomegalovirus humanbeta5</taxon>
        <taxon>Human cytomegalovirus</taxon>
    </lineage>
</organism>